<accession>P52162</accession>
<proteinExistence type="inferred from homology"/>
<evidence type="ECO:0000250" key="1"/>
<evidence type="ECO:0000255" key="2">
    <source>
        <dbReference type="PROSITE-ProRule" id="PRU00981"/>
    </source>
</evidence>
<evidence type="ECO:0000256" key="3">
    <source>
        <dbReference type="SAM" id="MobiDB-lite"/>
    </source>
</evidence>
<evidence type="ECO:0000305" key="4"/>
<dbReference type="EMBL" id="L12469">
    <property type="protein sequence ID" value="AAA16834.1"/>
    <property type="molecule type" value="Unassigned_DNA"/>
</dbReference>
<dbReference type="PIR" id="I50379">
    <property type="entry name" value="I50379"/>
</dbReference>
<dbReference type="RefSeq" id="NP_001383595.1">
    <molecule id="P52162-1"/>
    <property type="nucleotide sequence ID" value="NM_001396666.1"/>
</dbReference>
<dbReference type="RefSeq" id="XP_015141578.1">
    <property type="nucleotide sequence ID" value="XM_015286092.1"/>
</dbReference>
<dbReference type="BMRB" id="P52162"/>
<dbReference type="SMR" id="P52162"/>
<dbReference type="FunCoup" id="P52162">
    <property type="interactions" value="1360"/>
</dbReference>
<dbReference type="MINT" id="P52162"/>
<dbReference type="STRING" id="9031.ENSGALP00000044694"/>
<dbReference type="PaxDb" id="9031-ENSGALP00000040991"/>
<dbReference type="GeneID" id="100858676"/>
<dbReference type="KEGG" id="gga:100858676"/>
<dbReference type="VEuPathDB" id="HostDB:geneid_100858676"/>
<dbReference type="eggNOG" id="KOG2483">
    <property type="taxonomic scope" value="Eukaryota"/>
</dbReference>
<dbReference type="HOGENOM" id="CLU_109424_1_0_1"/>
<dbReference type="InParanoid" id="P52162"/>
<dbReference type="OrthoDB" id="8964853at2759"/>
<dbReference type="PhylomeDB" id="P52162"/>
<dbReference type="Reactome" id="R-GGA-8953750">
    <property type="pathway name" value="Transcriptional Regulation by E2F6"/>
</dbReference>
<dbReference type="PRO" id="PR:P52162"/>
<dbReference type="Proteomes" id="UP000000539">
    <property type="component" value="Chromosome 5"/>
</dbReference>
<dbReference type="Bgee" id="ENSGALG00000032249">
    <property type="expression patterns" value="Expressed in cerebellum and 13 other cell types or tissues"/>
</dbReference>
<dbReference type="GO" id="GO:0071339">
    <property type="term" value="C:MLL1 complex"/>
    <property type="evidence" value="ECO:0000250"/>
    <property type="project" value="UniProtKB"/>
</dbReference>
<dbReference type="GO" id="GO:0090575">
    <property type="term" value="C:RNA polymerase II transcription regulator complex"/>
    <property type="evidence" value="ECO:0000318"/>
    <property type="project" value="GO_Central"/>
</dbReference>
<dbReference type="GO" id="GO:0003677">
    <property type="term" value="F:DNA binding"/>
    <property type="evidence" value="ECO:0007669"/>
    <property type="project" value="UniProtKB-KW"/>
</dbReference>
<dbReference type="GO" id="GO:0003700">
    <property type="term" value="F:DNA-binding transcription factor activity"/>
    <property type="evidence" value="ECO:0000318"/>
    <property type="project" value="GO_Central"/>
</dbReference>
<dbReference type="GO" id="GO:0046983">
    <property type="term" value="F:protein dimerization activity"/>
    <property type="evidence" value="ECO:0007669"/>
    <property type="project" value="InterPro"/>
</dbReference>
<dbReference type="GO" id="GO:0045944">
    <property type="term" value="P:positive regulation of transcription by RNA polymerase II"/>
    <property type="evidence" value="ECO:0000318"/>
    <property type="project" value="GO_Central"/>
</dbReference>
<dbReference type="CDD" id="cd11406">
    <property type="entry name" value="bHLHzip_Max"/>
    <property type="match status" value="1"/>
</dbReference>
<dbReference type="FunFam" id="4.10.280.10:FF:000023">
    <property type="entry name" value="MAX isoform 13"/>
    <property type="match status" value="1"/>
</dbReference>
<dbReference type="Gene3D" id="4.10.280.10">
    <property type="entry name" value="Helix-loop-helix DNA-binding domain"/>
    <property type="match status" value="1"/>
</dbReference>
<dbReference type="InterPro" id="IPR011598">
    <property type="entry name" value="bHLH_dom"/>
</dbReference>
<dbReference type="InterPro" id="IPR036638">
    <property type="entry name" value="HLH_DNA-bd_sf"/>
</dbReference>
<dbReference type="PANTHER" id="PTHR10328:SF3">
    <property type="entry name" value="PROTEIN MAX"/>
    <property type="match status" value="1"/>
</dbReference>
<dbReference type="PANTHER" id="PTHR10328">
    <property type="entry name" value="PROTEIN MAX MYC-ASSOCIATED FACTOR X"/>
    <property type="match status" value="1"/>
</dbReference>
<dbReference type="Pfam" id="PF00010">
    <property type="entry name" value="HLH"/>
    <property type="match status" value="1"/>
</dbReference>
<dbReference type="SMART" id="SM00353">
    <property type="entry name" value="HLH"/>
    <property type="match status" value="1"/>
</dbReference>
<dbReference type="SUPFAM" id="SSF47459">
    <property type="entry name" value="HLH, helix-loop-helix DNA-binding domain"/>
    <property type="match status" value="1"/>
</dbReference>
<dbReference type="PROSITE" id="PS50888">
    <property type="entry name" value="BHLH"/>
    <property type="match status" value="1"/>
</dbReference>
<sequence>MSDNDDIEVESDEEQPRFQSAADKRAHHNALERKRRDHIKDSFHSLRDSVPSLQGEKASRAQILDKATEYIQYMRRKNHTHQQDIDDLKRQNALLEQQVRALEKARSSAQLQANYPAADSSLYTNPKGSTISAFDGGSDSSSDSEPDEPQSRKKLRMEAS</sequence>
<organism>
    <name type="scientific">Gallus gallus</name>
    <name type="common">Chicken</name>
    <dbReference type="NCBI Taxonomy" id="9031"/>
    <lineage>
        <taxon>Eukaryota</taxon>
        <taxon>Metazoa</taxon>
        <taxon>Chordata</taxon>
        <taxon>Craniata</taxon>
        <taxon>Vertebrata</taxon>
        <taxon>Euteleostomi</taxon>
        <taxon>Archelosauria</taxon>
        <taxon>Archosauria</taxon>
        <taxon>Dinosauria</taxon>
        <taxon>Saurischia</taxon>
        <taxon>Theropoda</taxon>
        <taxon>Coelurosauria</taxon>
        <taxon>Aves</taxon>
        <taxon>Neognathae</taxon>
        <taxon>Galloanserae</taxon>
        <taxon>Galliformes</taxon>
        <taxon>Phasianidae</taxon>
        <taxon>Phasianinae</taxon>
        <taxon>Gallus</taxon>
    </lineage>
</organism>
<gene>
    <name type="primary">MAX</name>
</gene>
<comment type="function">
    <text evidence="1">Transcription regulator. Forms a sequence-specific DNA-binding protein complex with MYC or MAD which recognizes the core sequence 5'-CAC[GA]TG-3'. The MYC-MAX complex is a transcriptional activator, whereas the MAD-MAX complex is a repressor (By similarity).</text>
</comment>
<comment type="subunit">
    <text evidence="1">Efficient DNA binding requires dimerization with another bHLH protein. Binds DNA as a heterodimer with MYC or MAD. Component of some MLL1/MLL complex (By similarity).</text>
</comment>
<comment type="subcellular location">
    <subcellularLocation>
        <location>Nucleus</location>
    </subcellularLocation>
</comment>
<comment type="alternative products">
    <event type="alternative splicing"/>
    <isoform>
        <id>P52162-1</id>
        <name>Long</name>
        <sequence type="displayed"/>
    </isoform>
    <isoform>
        <id>P52162-2</id>
        <name>Short</name>
        <sequence type="described" ref="VSP_002120"/>
    </isoform>
</comment>
<comment type="PTM">
    <text evidence="4">Phosphorylated.</text>
</comment>
<comment type="similarity">
    <text evidence="4">Belongs to the MAX family.</text>
</comment>
<protein>
    <recommendedName>
        <fullName>Protein max</fullName>
    </recommendedName>
    <alternativeName>
        <fullName>Myc-associated factor X</fullName>
    </alternativeName>
</protein>
<feature type="chain" id="PRO_0000127272" description="Protein max">
    <location>
        <begin position="1"/>
        <end position="160"/>
    </location>
</feature>
<feature type="domain" description="bHLH" evidence="2">
    <location>
        <begin position="23"/>
        <end position="74"/>
    </location>
</feature>
<feature type="region of interest" description="Disordered" evidence="3">
    <location>
        <begin position="1"/>
        <end position="40"/>
    </location>
</feature>
<feature type="region of interest" description="Leucine-zipper">
    <location>
        <begin position="81"/>
        <end position="102"/>
    </location>
</feature>
<feature type="region of interest" description="Disordered" evidence="3">
    <location>
        <begin position="105"/>
        <end position="160"/>
    </location>
</feature>
<feature type="compositionally biased region" description="Acidic residues" evidence="3">
    <location>
        <begin position="1"/>
        <end position="13"/>
    </location>
</feature>
<feature type="compositionally biased region" description="Basic and acidic residues" evidence="3">
    <location>
        <begin position="29"/>
        <end position="40"/>
    </location>
</feature>
<feature type="compositionally biased region" description="Polar residues" evidence="3">
    <location>
        <begin position="121"/>
        <end position="132"/>
    </location>
</feature>
<feature type="splice variant" id="VSP_002120" description="In isoform Short." evidence="4">
    <location>
        <begin position="13"/>
        <end position="21"/>
    </location>
</feature>
<reference key="1">
    <citation type="journal article" date="1994" name="Oncogene">
        <title>Structural analysis of the chicken max gene.</title>
        <authorList>
            <person name="Sollenberger K.G."/>
            <person name="Kao T.L."/>
            <person name="Taparowsky E.J."/>
        </authorList>
    </citation>
    <scope>NUCLEOTIDE SEQUENCE (ISOFORMS LONG AND SHORT)</scope>
    <source>
        <tissue>Fibroblast</tissue>
    </source>
</reference>
<keyword id="KW-0010">Activator</keyword>
<keyword id="KW-0025">Alternative splicing</keyword>
<keyword id="KW-0238">DNA-binding</keyword>
<keyword id="KW-0539">Nucleus</keyword>
<keyword id="KW-0597">Phosphoprotein</keyword>
<keyword id="KW-1185">Reference proteome</keyword>
<keyword id="KW-0678">Repressor</keyword>
<keyword id="KW-0804">Transcription</keyword>
<keyword id="KW-0805">Transcription regulation</keyword>
<name>MAX_CHICK</name>